<keyword id="KW-0963">Cytoplasm</keyword>
<keyword id="KW-1185">Reference proteome</keyword>
<keyword id="KW-0690">Ribosome biogenesis</keyword>
<feature type="chain" id="PRO_1000000115" description="Ribosome-binding factor A">
    <location>
        <begin position="1"/>
        <end position="138"/>
    </location>
</feature>
<feature type="region of interest" description="Disordered" evidence="2">
    <location>
        <begin position="1"/>
        <end position="21"/>
    </location>
</feature>
<feature type="compositionally biased region" description="Low complexity" evidence="2">
    <location>
        <begin position="1"/>
        <end position="20"/>
    </location>
</feature>
<proteinExistence type="inferred from homology"/>
<sequence length="138" mass="15530">MSSRPPSSSGPAGIPKGAPSQRQLRVAEEIRHVLAGVFARQEFRDPELATTTFTINEVRISPDLKHATVFISRLGSSEIEPLLPNLKRVATYLRGEVAKVMRLRYAPELHFQPDSALEYAMHVDSLLRRPEVKRDLDE</sequence>
<organism>
    <name type="scientific">Granulibacter bethesdensis (strain ATCC BAA-1260 / CGDNIH1)</name>
    <dbReference type="NCBI Taxonomy" id="391165"/>
    <lineage>
        <taxon>Bacteria</taxon>
        <taxon>Pseudomonadati</taxon>
        <taxon>Pseudomonadota</taxon>
        <taxon>Alphaproteobacteria</taxon>
        <taxon>Acetobacterales</taxon>
        <taxon>Acetobacteraceae</taxon>
        <taxon>Granulibacter</taxon>
    </lineage>
</organism>
<comment type="function">
    <text evidence="1">One of several proteins that assist in the late maturation steps of the functional core of the 30S ribosomal subunit. Associates with free 30S ribosomal subunits (but not with 30S subunits that are part of 70S ribosomes or polysomes). Required for efficient processing of 16S rRNA. May interact with the 5'-terminal helix region of 16S rRNA.</text>
</comment>
<comment type="subunit">
    <text evidence="1">Monomer. Binds 30S ribosomal subunits, but not 50S ribosomal subunits or 70S ribosomes.</text>
</comment>
<comment type="subcellular location">
    <subcellularLocation>
        <location evidence="1">Cytoplasm</location>
    </subcellularLocation>
</comment>
<comment type="similarity">
    <text evidence="1">Belongs to the RbfA family.</text>
</comment>
<name>RBFA_GRABC</name>
<protein>
    <recommendedName>
        <fullName evidence="1">Ribosome-binding factor A</fullName>
    </recommendedName>
</protein>
<gene>
    <name evidence="1" type="primary">rbfA</name>
    <name type="ordered locus">GbCGDNIH1_2391</name>
</gene>
<evidence type="ECO:0000255" key="1">
    <source>
        <dbReference type="HAMAP-Rule" id="MF_00003"/>
    </source>
</evidence>
<evidence type="ECO:0000256" key="2">
    <source>
        <dbReference type="SAM" id="MobiDB-lite"/>
    </source>
</evidence>
<accession>Q0BPG3</accession>
<reference key="1">
    <citation type="journal article" date="2007" name="J. Bacteriol.">
        <title>Genome sequence analysis of the emerging human pathogenic acetic acid bacterium Granulibacter bethesdensis.</title>
        <authorList>
            <person name="Greenberg D.E."/>
            <person name="Porcella S.F."/>
            <person name="Zelazny A.M."/>
            <person name="Virtaneva K."/>
            <person name="Sturdevant D.E."/>
            <person name="Kupko J.J. III"/>
            <person name="Barbian K.D."/>
            <person name="Babar A."/>
            <person name="Dorward D.W."/>
            <person name="Holland S.M."/>
        </authorList>
    </citation>
    <scope>NUCLEOTIDE SEQUENCE [LARGE SCALE GENOMIC DNA]</scope>
    <source>
        <strain>ATCC BAA-1260 / CGDNIH1</strain>
    </source>
</reference>
<dbReference type="EMBL" id="CP000394">
    <property type="protein sequence ID" value="ABI63289.1"/>
    <property type="molecule type" value="Genomic_DNA"/>
</dbReference>
<dbReference type="RefSeq" id="WP_011633091.1">
    <property type="nucleotide sequence ID" value="NC_008343.2"/>
</dbReference>
<dbReference type="SMR" id="Q0BPG3"/>
<dbReference type="STRING" id="391165.GbCGDNIH1_2391"/>
<dbReference type="GeneID" id="69746577"/>
<dbReference type="KEGG" id="gbe:GbCGDNIH1_2391"/>
<dbReference type="eggNOG" id="COG0858">
    <property type="taxonomic scope" value="Bacteria"/>
</dbReference>
<dbReference type="HOGENOM" id="CLU_089475_1_0_5"/>
<dbReference type="OrthoDB" id="9805051at2"/>
<dbReference type="Proteomes" id="UP000001963">
    <property type="component" value="Chromosome"/>
</dbReference>
<dbReference type="GO" id="GO:0005829">
    <property type="term" value="C:cytosol"/>
    <property type="evidence" value="ECO:0007669"/>
    <property type="project" value="TreeGrafter"/>
</dbReference>
<dbReference type="GO" id="GO:0043024">
    <property type="term" value="F:ribosomal small subunit binding"/>
    <property type="evidence" value="ECO:0007669"/>
    <property type="project" value="TreeGrafter"/>
</dbReference>
<dbReference type="GO" id="GO:0030490">
    <property type="term" value="P:maturation of SSU-rRNA"/>
    <property type="evidence" value="ECO:0007669"/>
    <property type="project" value="UniProtKB-UniRule"/>
</dbReference>
<dbReference type="Gene3D" id="3.30.300.20">
    <property type="match status" value="1"/>
</dbReference>
<dbReference type="HAMAP" id="MF_00003">
    <property type="entry name" value="RbfA"/>
    <property type="match status" value="1"/>
</dbReference>
<dbReference type="InterPro" id="IPR015946">
    <property type="entry name" value="KH_dom-like_a/b"/>
</dbReference>
<dbReference type="InterPro" id="IPR000238">
    <property type="entry name" value="RbfA"/>
</dbReference>
<dbReference type="InterPro" id="IPR023799">
    <property type="entry name" value="RbfA_dom_sf"/>
</dbReference>
<dbReference type="InterPro" id="IPR020053">
    <property type="entry name" value="Ribosome-bd_factorA_CS"/>
</dbReference>
<dbReference type="NCBIfam" id="NF001802">
    <property type="entry name" value="PRK00521.2-5"/>
    <property type="match status" value="1"/>
</dbReference>
<dbReference type="NCBIfam" id="TIGR00082">
    <property type="entry name" value="rbfA"/>
    <property type="match status" value="1"/>
</dbReference>
<dbReference type="PANTHER" id="PTHR33515">
    <property type="entry name" value="RIBOSOME-BINDING FACTOR A, CHLOROPLASTIC-RELATED"/>
    <property type="match status" value="1"/>
</dbReference>
<dbReference type="PANTHER" id="PTHR33515:SF1">
    <property type="entry name" value="RIBOSOME-BINDING FACTOR A, CHLOROPLASTIC-RELATED"/>
    <property type="match status" value="1"/>
</dbReference>
<dbReference type="Pfam" id="PF02033">
    <property type="entry name" value="RBFA"/>
    <property type="match status" value="1"/>
</dbReference>
<dbReference type="SUPFAM" id="SSF89919">
    <property type="entry name" value="Ribosome-binding factor A, RbfA"/>
    <property type="match status" value="1"/>
</dbReference>
<dbReference type="PROSITE" id="PS01319">
    <property type="entry name" value="RBFA"/>
    <property type="match status" value="1"/>
</dbReference>